<organism>
    <name type="scientific">Xanthomonas campestris pv. campestris (strain ATCC 33913 / DSM 3586 / NCPPB 528 / LMG 568 / P 25)</name>
    <dbReference type="NCBI Taxonomy" id="190485"/>
    <lineage>
        <taxon>Bacteria</taxon>
        <taxon>Pseudomonadati</taxon>
        <taxon>Pseudomonadota</taxon>
        <taxon>Gammaproteobacteria</taxon>
        <taxon>Lysobacterales</taxon>
        <taxon>Lysobacteraceae</taxon>
        <taxon>Xanthomonas</taxon>
    </lineage>
</organism>
<comment type="function">
    <text evidence="1">Catalyzes the deamination of dCTP to dUTP.</text>
</comment>
<comment type="catalytic activity">
    <reaction evidence="1">
        <text>dCTP + H2O + H(+) = dUTP + NH4(+)</text>
        <dbReference type="Rhea" id="RHEA:22680"/>
        <dbReference type="ChEBI" id="CHEBI:15377"/>
        <dbReference type="ChEBI" id="CHEBI:15378"/>
        <dbReference type="ChEBI" id="CHEBI:28938"/>
        <dbReference type="ChEBI" id="CHEBI:61481"/>
        <dbReference type="ChEBI" id="CHEBI:61555"/>
        <dbReference type="EC" id="3.5.4.13"/>
    </reaction>
</comment>
<comment type="pathway">
    <text evidence="1">Pyrimidine metabolism; dUMP biosynthesis; dUMP from dCTP (dUTP route): step 1/2.</text>
</comment>
<comment type="subunit">
    <text evidence="1">Homotrimer.</text>
</comment>
<comment type="similarity">
    <text evidence="1">Belongs to the dCTP deaminase family.</text>
</comment>
<dbReference type="EC" id="3.5.4.13" evidence="1"/>
<dbReference type="EMBL" id="AE008922">
    <property type="protein sequence ID" value="AAM41842.1"/>
    <property type="molecule type" value="Genomic_DNA"/>
</dbReference>
<dbReference type="RefSeq" id="NP_637918.1">
    <property type="nucleotide sequence ID" value="NC_003902.1"/>
</dbReference>
<dbReference type="RefSeq" id="WP_011037700.1">
    <property type="nucleotide sequence ID" value="NC_003902.1"/>
</dbReference>
<dbReference type="SMR" id="Q8P7P1"/>
<dbReference type="STRING" id="190485.XCC2570"/>
<dbReference type="EnsemblBacteria" id="AAM41842">
    <property type="protein sequence ID" value="AAM41842"/>
    <property type="gene ID" value="XCC2570"/>
</dbReference>
<dbReference type="KEGG" id="xcc:XCC2570"/>
<dbReference type="PATRIC" id="fig|190485.4.peg.2739"/>
<dbReference type="eggNOG" id="COG0717">
    <property type="taxonomic scope" value="Bacteria"/>
</dbReference>
<dbReference type="HOGENOM" id="CLU_087476_4_0_6"/>
<dbReference type="OrthoDB" id="9780956at2"/>
<dbReference type="UniPathway" id="UPA00610">
    <property type="reaction ID" value="UER00665"/>
</dbReference>
<dbReference type="Proteomes" id="UP000001010">
    <property type="component" value="Chromosome"/>
</dbReference>
<dbReference type="GO" id="GO:0008829">
    <property type="term" value="F:dCTP deaminase activity"/>
    <property type="evidence" value="ECO:0000318"/>
    <property type="project" value="GO_Central"/>
</dbReference>
<dbReference type="GO" id="GO:0000166">
    <property type="term" value="F:nucleotide binding"/>
    <property type="evidence" value="ECO:0007669"/>
    <property type="project" value="UniProtKB-KW"/>
</dbReference>
<dbReference type="GO" id="GO:0006226">
    <property type="term" value="P:dUMP biosynthetic process"/>
    <property type="evidence" value="ECO:0007669"/>
    <property type="project" value="UniProtKB-UniPathway"/>
</dbReference>
<dbReference type="GO" id="GO:0006229">
    <property type="term" value="P:dUTP biosynthetic process"/>
    <property type="evidence" value="ECO:0007669"/>
    <property type="project" value="UniProtKB-UniRule"/>
</dbReference>
<dbReference type="GO" id="GO:0015949">
    <property type="term" value="P:nucleobase-containing small molecule interconversion"/>
    <property type="evidence" value="ECO:0000318"/>
    <property type="project" value="GO_Central"/>
</dbReference>
<dbReference type="CDD" id="cd07557">
    <property type="entry name" value="trimeric_dUTPase"/>
    <property type="match status" value="1"/>
</dbReference>
<dbReference type="FunFam" id="2.70.40.10:FF:000001">
    <property type="entry name" value="dCTP deaminase"/>
    <property type="match status" value="1"/>
</dbReference>
<dbReference type="Gene3D" id="2.70.40.10">
    <property type="match status" value="1"/>
</dbReference>
<dbReference type="HAMAP" id="MF_00146">
    <property type="entry name" value="dCTP_deaminase"/>
    <property type="match status" value="1"/>
</dbReference>
<dbReference type="InterPro" id="IPR011962">
    <property type="entry name" value="dCTP_deaminase"/>
</dbReference>
<dbReference type="InterPro" id="IPR036157">
    <property type="entry name" value="dUTPase-like_sf"/>
</dbReference>
<dbReference type="InterPro" id="IPR033704">
    <property type="entry name" value="dUTPase_trimeric"/>
</dbReference>
<dbReference type="NCBIfam" id="TIGR02274">
    <property type="entry name" value="dCTP_deam"/>
    <property type="match status" value="1"/>
</dbReference>
<dbReference type="PANTHER" id="PTHR42680">
    <property type="entry name" value="DCTP DEAMINASE"/>
    <property type="match status" value="1"/>
</dbReference>
<dbReference type="PANTHER" id="PTHR42680:SF3">
    <property type="entry name" value="DCTP DEAMINASE"/>
    <property type="match status" value="1"/>
</dbReference>
<dbReference type="Pfam" id="PF22769">
    <property type="entry name" value="DCD"/>
    <property type="match status" value="1"/>
</dbReference>
<dbReference type="SUPFAM" id="SSF51283">
    <property type="entry name" value="dUTPase-like"/>
    <property type="match status" value="1"/>
</dbReference>
<name>DCD_XANCP</name>
<keyword id="KW-0378">Hydrolase</keyword>
<keyword id="KW-0546">Nucleotide metabolism</keyword>
<keyword id="KW-0547">Nucleotide-binding</keyword>
<keyword id="KW-1185">Reference proteome</keyword>
<proteinExistence type="inferred from homology"/>
<protein>
    <recommendedName>
        <fullName evidence="1">dCTP deaminase</fullName>
        <ecNumber evidence="1">3.5.4.13</ecNumber>
    </recommendedName>
    <alternativeName>
        <fullName evidence="1">Deoxycytidine triphosphate deaminase</fullName>
    </alternativeName>
</protein>
<feature type="chain" id="PRO_0000156021" description="dCTP deaminase">
    <location>
        <begin position="1"/>
        <end position="189"/>
    </location>
</feature>
<feature type="active site" description="Proton donor/acceptor" evidence="1">
    <location>
        <position position="138"/>
    </location>
</feature>
<feature type="binding site" evidence="1">
    <location>
        <begin position="112"/>
        <end position="117"/>
    </location>
    <ligand>
        <name>dCTP</name>
        <dbReference type="ChEBI" id="CHEBI:61481"/>
    </ligand>
</feature>
<feature type="binding site" evidence="1">
    <location>
        <begin position="136"/>
        <end position="138"/>
    </location>
    <ligand>
        <name>dCTP</name>
        <dbReference type="ChEBI" id="CHEBI:61481"/>
    </ligand>
</feature>
<feature type="binding site" evidence="1">
    <location>
        <position position="157"/>
    </location>
    <ligand>
        <name>dCTP</name>
        <dbReference type="ChEBI" id="CHEBI:61481"/>
    </ligand>
</feature>
<feature type="binding site" evidence="1">
    <location>
        <position position="171"/>
    </location>
    <ligand>
        <name>dCTP</name>
        <dbReference type="ChEBI" id="CHEBI:61481"/>
    </ligand>
</feature>
<feature type="binding site" evidence="1">
    <location>
        <position position="181"/>
    </location>
    <ligand>
        <name>dCTP</name>
        <dbReference type="ChEBI" id="CHEBI:61481"/>
    </ligand>
</feature>
<evidence type="ECO:0000255" key="1">
    <source>
        <dbReference type="HAMAP-Rule" id="MF_00146"/>
    </source>
</evidence>
<gene>
    <name evidence="1" type="primary">dcd</name>
    <name type="ordered locus">XCC2570</name>
</gene>
<reference key="1">
    <citation type="journal article" date="2002" name="Nature">
        <title>Comparison of the genomes of two Xanthomonas pathogens with differing host specificities.</title>
        <authorList>
            <person name="da Silva A.C.R."/>
            <person name="Ferro J.A."/>
            <person name="Reinach F.C."/>
            <person name="Farah C.S."/>
            <person name="Furlan L.R."/>
            <person name="Quaggio R.B."/>
            <person name="Monteiro-Vitorello C.B."/>
            <person name="Van Sluys M.A."/>
            <person name="Almeida N.F. Jr."/>
            <person name="Alves L.M.C."/>
            <person name="do Amaral A.M."/>
            <person name="Bertolini M.C."/>
            <person name="Camargo L.E.A."/>
            <person name="Camarotte G."/>
            <person name="Cannavan F."/>
            <person name="Cardozo J."/>
            <person name="Chambergo F."/>
            <person name="Ciapina L.P."/>
            <person name="Cicarelli R.M.B."/>
            <person name="Coutinho L.L."/>
            <person name="Cursino-Santos J.R."/>
            <person name="El-Dorry H."/>
            <person name="Faria J.B."/>
            <person name="Ferreira A.J.S."/>
            <person name="Ferreira R.C.C."/>
            <person name="Ferro M.I.T."/>
            <person name="Formighieri E.F."/>
            <person name="Franco M.C."/>
            <person name="Greggio C.C."/>
            <person name="Gruber A."/>
            <person name="Katsuyama A.M."/>
            <person name="Kishi L.T."/>
            <person name="Leite R.P."/>
            <person name="Lemos E.G.M."/>
            <person name="Lemos M.V.F."/>
            <person name="Locali E.C."/>
            <person name="Machado M.A."/>
            <person name="Madeira A.M.B.N."/>
            <person name="Martinez-Rossi N.M."/>
            <person name="Martins E.C."/>
            <person name="Meidanis J."/>
            <person name="Menck C.F.M."/>
            <person name="Miyaki C.Y."/>
            <person name="Moon D.H."/>
            <person name="Moreira L.M."/>
            <person name="Novo M.T.M."/>
            <person name="Okura V.K."/>
            <person name="Oliveira M.C."/>
            <person name="Oliveira V.R."/>
            <person name="Pereira H.A."/>
            <person name="Rossi A."/>
            <person name="Sena J.A.D."/>
            <person name="Silva C."/>
            <person name="de Souza R.F."/>
            <person name="Spinola L.A.F."/>
            <person name="Takita M.A."/>
            <person name="Tamura R.E."/>
            <person name="Teixeira E.C."/>
            <person name="Tezza R.I.D."/>
            <person name="Trindade dos Santos M."/>
            <person name="Truffi D."/>
            <person name="Tsai S.M."/>
            <person name="White F.F."/>
            <person name="Setubal J.C."/>
            <person name="Kitajima J.P."/>
        </authorList>
    </citation>
    <scope>NUCLEOTIDE SEQUENCE [LARGE SCALE GENOMIC DNA]</scope>
    <source>
        <strain>ATCC 33913 / DSM 3586 / NCPPB 528 / LMG 568 / P 25</strain>
    </source>
</reference>
<accession>Q8P7P1</accession>
<sequence>MSIKSDRWIKRMAEQHAMIEPFEPGQIKHDAAGQRIVSFGTSSYGYDVRCSREFKIFTNINSTIVDPKHFDPGSFVDIESDVCIIPPNSFALARTVEYFRIPRDTLVVCLGKSTYARCGIIVNVTPLEPEWEGRVTLEFSNTTPLPARIYANEGVAQMLFFQSDEVCETSYKDRGGKYQGQTGVTLPRT</sequence>